<evidence type="ECO:0000255" key="1">
    <source>
        <dbReference type="HAMAP-Rule" id="MF_00270"/>
    </source>
</evidence>
<evidence type="ECO:0000305" key="2"/>
<keyword id="KW-0687">Ribonucleoprotein</keyword>
<keyword id="KW-0689">Ribosomal protein</keyword>
<keyword id="KW-0694">RNA-binding</keyword>
<keyword id="KW-0699">rRNA-binding</keyword>
<organism>
    <name type="scientific">Rhodococcus jostii (strain RHA1)</name>
    <dbReference type="NCBI Taxonomy" id="101510"/>
    <lineage>
        <taxon>Bacteria</taxon>
        <taxon>Bacillati</taxon>
        <taxon>Actinomycetota</taxon>
        <taxon>Actinomycetes</taxon>
        <taxon>Mycobacteriales</taxon>
        <taxon>Nocardiaceae</taxon>
        <taxon>Rhodococcus</taxon>
    </lineage>
</organism>
<feature type="chain" id="PRO_0000345531" description="Small ribosomal subunit protein bS18A">
    <location>
        <begin position="1"/>
        <end position="80"/>
    </location>
</feature>
<protein>
    <recommendedName>
        <fullName evidence="1">Small ribosomal subunit protein bS18A</fullName>
    </recommendedName>
    <alternativeName>
        <fullName evidence="2">30S ribosomal protein S18 1</fullName>
    </alternativeName>
</protein>
<gene>
    <name evidence="1" type="primary">rpsR1</name>
    <name type="ordered locus">RHA1_ro03430</name>
</gene>
<comment type="function">
    <text evidence="1">Binds as a heterodimer with protein bS6 to the central domain of the 16S rRNA, where it helps stabilize the platform of the 30S subunit.</text>
</comment>
<comment type="subunit">
    <text evidence="1">Part of the 30S ribosomal subunit. Forms a tight heterodimer with protein bS6.</text>
</comment>
<comment type="similarity">
    <text evidence="1">Belongs to the bacterial ribosomal protein bS18 family.</text>
</comment>
<dbReference type="EMBL" id="CP000431">
    <property type="protein sequence ID" value="ABG95233.1"/>
    <property type="molecule type" value="Genomic_DNA"/>
</dbReference>
<dbReference type="SMR" id="Q0SB53"/>
<dbReference type="KEGG" id="rha:RHA1_ro03430"/>
<dbReference type="eggNOG" id="COG0238">
    <property type="taxonomic scope" value="Bacteria"/>
</dbReference>
<dbReference type="HOGENOM" id="CLU_148710_2_2_11"/>
<dbReference type="OrthoDB" id="9812008at2"/>
<dbReference type="Proteomes" id="UP000008710">
    <property type="component" value="Chromosome"/>
</dbReference>
<dbReference type="GO" id="GO:0022627">
    <property type="term" value="C:cytosolic small ribosomal subunit"/>
    <property type="evidence" value="ECO:0007669"/>
    <property type="project" value="TreeGrafter"/>
</dbReference>
<dbReference type="GO" id="GO:0070181">
    <property type="term" value="F:small ribosomal subunit rRNA binding"/>
    <property type="evidence" value="ECO:0007669"/>
    <property type="project" value="TreeGrafter"/>
</dbReference>
<dbReference type="GO" id="GO:0003735">
    <property type="term" value="F:structural constituent of ribosome"/>
    <property type="evidence" value="ECO:0007669"/>
    <property type="project" value="InterPro"/>
</dbReference>
<dbReference type="GO" id="GO:0006412">
    <property type="term" value="P:translation"/>
    <property type="evidence" value="ECO:0007669"/>
    <property type="project" value="UniProtKB-UniRule"/>
</dbReference>
<dbReference type="FunFam" id="4.10.640.10:FF:000004">
    <property type="entry name" value="30S ribosomal protein S18"/>
    <property type="match status" value="1"/>
</dbReference>
<dbReference type="Gene3D" id="4.10.640.10">
    <property type="entry name" value="Ribosomal protein S18"/>
    <property type="match status" value="1"/>
</dbReference>
<dbReference type="HAMAP" id="MF_00270">
    <property type="entry name" value="Ribosomal_bS18"/>
    <property type="match status" value="1"/>
</dbReference>
<dbReference type="InterPro" id="IPR001648">
    <property type="entry name" value="Ribosomal_bS18"/>
</dbReference>
<dbReference type="InterPro" id="IPR018275">
    <property type="entry name" value="Ribosomal_bS18_CS"/>
</dbReference>
<dbReference type="InterPro" id="IPR036870">
    <property type="entry name" value="Ribosomal_bS18_sf"/>
</dbReference>
<dbReference type="NCBIfam" id="TIGR00165">
    <property type="entry name" value="S18"/>
    <property type="match status" value="1"/>
</dbReference>
<dbReference type="PANTHER" id="PTHR13479">
    <property type="entry name" value="30S RIBOSOMAL PROTEIN S18"/>
    <property type="match status" value="1"/>
</dbReference>
<dbReference type="PANTHER" id="PTHR13479:SF62">
    <property type="entry name" value="SMALL RIBOSOMAL SUBUNIT PROTEIN BS18A"/>
    <property type="match status" value="1"/>
</dbReference>
<dbReference type="Pfam" id="PF01084">
    <property type="entry name" value="Ribosomal_S18"/>
    <property type="match status" value="1"/>
</dbReference>
<dbReference type="PRINTS" id="PR00974">
    <property type="entry name" value="RIBOSOMALS18"/>
</dbReference>
<dbReference type="SUPFAM" id="SSF46911">
    <property type="entry name" value="Ribosomal protein S18"/>
    <property type="match status" value="1"/>
</dbReference>
<dbReference type="PROSITE" id="PS00057">
    <property type="entry name" value="RIBOSOMAL_S18"/>
    <property type="match status" value="1"/>
</dbReference>
<sequence length="80" mass="9272">MPKPPLRDKVMKKKICIFCKEKNTQINYKDTTLLRKYVSDRGKIRARRVTGNCVQHQRDVAIAVKNSREVALLPYATVAR</sequence>
<proteinExistence type="inferred from homology"/>
<reference key="1">
    <citation type="journal article" date="2006" name="Proc. Natl. Acad. Sci. U.S.A.">
        <title>The complete genome of Rhodococcus sp. RHA1 provides insights into a catabolic powerhouse.</title>
        <authorList>
            <person name="McLeod M.P."/>
            <person name="Warren R.L."/>
            <person name="Hsiao W.W.L."/>
            <person name="Araki N."/>
            <person name="Myhre M."/>
            <person name="Fernandes C."/>
            <person name="Miyazawa D."/>
            <person name="Wong W."/>
            <person name="Lillquist A.L."/>
            <person name="Wang D."/>
            <person name="Dosanjh M."/>
            <person name="Hara H."/>
            <person name="Petrescu A."/>
            <person name="Morin R.D."/>
            <person name="Yang G."/>
            <person name="Stott J.M."/>
            <person name="Schein J.E."/>
            <person name="Shin H."/>
            <person name="Smailus D."/>
            <person name="Siddiqui A.S."/>
            <person name="Marra M.A."/>
            <person name="Jones S.J.M."/>
            <person name="Holt R."/>
            <person name="Brinkman F.S.L."/>
            <person name="Miyauchi K."/>
            <person name="Fukuda M."/>
            <person name="Davies J.E."/>
            <person name="Mohn W.W."/>
            <person name="Eltis L.D."/>
        </authorList>
    </citation>
    <scope>NUCLEOTIDE SEQUENCE [LARGE SCALE GENOMIC DNA]</scope>
    <source>
        <strain>RHA1</strain>
    </source>
</reference>
<accession>Q0SB53</accession>
<name>RS181_RHOJR</name>